<gene>
    <name type="primary">NOB1</name>
    <name type="ORF">QccE-20755</name>
</gene>
<sequence length="412" mass="46456">MAPVEHVVADAGAFLRDAALQDIGKNIYTIREVVTEIRDKATRRRLAVLPYELRFKEPLPQYVRLVTEFSKKTGDYPSLSATDIQVLALTYQLEAEFVGVSHLKQEPQKVKVSSSIQHPETPLHISGFHLPSKPKSPQEAEKGHPACEPENLEFSSFMFWRNPLPSIDHELQELLIDRSEDVPSKEEEEAENGFEDRKDDSDDDGGGWITPNNIKQIQQELEQCDVPKDVRVGCVTTDFAMQNVLLQMGLHVLAVNGMLIREARSYILRCHGCFKTTSDMSRVFCAHCGNKTLKKVSVTVSDDGALHMHFSRNPKVLNPRGLRYSLPTPKGGKYAVNPHLTEDQRFPQLRLSRKARQKTNVFAPDYIAGVSPFVENDVSSRSATLQVRDSTLGAGRRRLNPNASRKKFVKKR</sequence>
<keyword id="KW-0255">Endonuclease</keyword>
<keyword id="KW-0378">Hydrolase</keyword>
<keyword id="KW-0479">Metal-binding</keyword>
<keyword id="KW-0540">Nuclease</keyword>
<keyword id="KW-0539">Nucleus</keyword>
<keyword id="KW-0597">Phosphoprotein</keyword>
<keyword id="KW-1185">Reference proteome</keyword>
<keyword id="KW-0862">Zinc</keyword>
<keyword id="KW-0863">Zinc-finger</keyword>
<dbReference type="EC" id="3.1.-.-" evidence="2"/>
<dbReference type="EMBL" id="AB169707">
    <property type="protein sequence ID" value="BAE01788.1"/>
    <property type="molecule type" value="mRNA"/>
</dbReference>
<dbReference type="RefSeq" id="NP_001270471.1">
    <property type="nucleotide sequence ID" value="NM_001283542.1"/>
</dbReference>
<dbReference type="SMR" id="Q4R537"/>
<dbReference type="STRING" id="9541.ENSMFAP00000014108"/>
<dbReference type="eggNOG" id="KOG2463">
    <property type="taxonomic scope" value="Eukaryota"/>
</dbReference>
<dbReference type="Proteomes" id="UP000233100">
    <property type="component" value="Unplaced"/>
</dbReference>
<dbReference type="GO" id="GO:0005634">
    <property type="term" value="C:nucleus"/>
    <property type="evidence" value="ECO:0007669"/>
    <property type="project" value="UniProtKB-SubCell"/>
</dbReference>
<dbReference type="GO" id="GO:0030688">
    <property type="term" value="C:preribosome, small subunit precursor"/>
    <property type="evidence" value="ECO:0007669"/>
    <property type="project" value="TreeGrafter"/>
</dbReference>
<dbReference type="GO" id="GO:0004521">
    <property type="term" value="F:RNA endonuclease activity"/>
    <property type="evidence" value="ECO:0007669"/>
    <property type="project" value="InterPro"/>
</dbReference>
<dbReference type="GO" id="GO:0008270">
    <property type="term" value="F:zinc ion binding"/>
    <property type="evidence" value="ECO:0007669"/>
    <property type="project" value="UniProtKB-KW"/>
</dbReference>
<dbReference type="GO" id="GO:0030490">
    <property type="term" value="P:maturation of SSU-rRNA"/>
    <property type="evidence" value="ECO:0007669"/>
    <property type="project" value="TreeGrafter"/>
</dbReference>
<dbReference type="CDD" id="cd09876">
    <property type="entry name" value="PIN_Nob1-like"/>
    <property type="match status" value="1"/>
</dbReference>
<dbReference type="FunFam" id="3.40.50.1010:FF:000018">
    <property type="entry name" value="RNA-binding protein NOB1"/>
    <property type="match status" value="1"/>
</dbReference>
<dbReference type="Gene3D" id="3.40.50.1010">
    <property type="entry name" value="5'-nuclease"/>
    <property type="match status" value="1"/>
</dbReference>
<dbReference type="Gene3D" id="6.20.210.10">
    <property type="entry name" value="Nin one binding (NOB1), Zn-ribbon-like"/>
    <property type="match status" value="1"/>
</dbReference>
<dbReference type="InterPro" id="IPR039907">
    <property type="entry name" value="NOB1"/>
</dbReference>
<dbReference type="InterPro" id="IPR017117">
    <property type="entry name" value="Nob1_euk"/>
</dbReference>
<dbReference type="InterPro" id="IPR036283">
    <property type="entry name" value="NOB1_Zf-like_sf"/>
</dbReference>
<dbReference type="InterPro" id="IPR014881">
    <property type="entry name" value="NOB1_Zn-bd"/>
</dbReference>
<dbReference type="InterPro" id="IPR002716">
    <property type="entry name" value="PIN_dom"/>
</dbReference>
<dbReference type="InterPro" id="IPR033411">
    <property type="entry name" value="Ribonuclease_PIN"/>
</dbReference>
<dbReference type="InterPro" id="IPR033461">
    <property type="entry name" value="WRNPLPNID"/>
</dbReference>
<dbReference type="PANTHER" id="PTHR12814">
    <property type="entry name" value="RNA-BINDING PROTEIN NOB1"/>
    <property type="match status" value="1"/>
</dbReference>
<dbReference type="PANTHER" id="PTHR12814:SF2">
    <property type="entry name" value="RNA-BINDING PROTEIN NOB1"/>
    <property type="match status" value="1"/>
</dbReference>
<dbReference type="Pfam" id="PF17146">
    <property type="entry name" value="PIN_6"/>
    <property type="match status" value="1"/>
</dbReference>
<dbReference type="Pfam" id="PF15017">
    <property type="entry name" value="WRNPLPNID"/>
    <property type="match status" value="1"/>
</dbReference>
<dbReference type="Pfam" id="PF08772">
    <property type="entry name" value="Zn_ribbon_NOB1"/>
    <property type="match status" value="1"/>
</dbReference>
<dbReference type="PIRSF" id="PIRSF037125">
    <property type="entry name" value="D-site_20S_pre-rRNA_nuclease"/>
    <property type="match status" value="1"/>
</dbReference>
<dbReference type="SMART" id="SM00670">
    <property type="entry name" value="PINc"/>
    <property type="match status" value="1"/>
</dbReference>
<dbReference type="SUPFAM" id="SSF144206">
    <property type="entry name" value="NOB1 zinc finger-like"/>
    <property type="match status" value="1"/>
</dbReference>
<evidence type="ECO:0000250" key="1">
    <source>
        <dbReference type="UniProtKB" id="Q8BW10"/>
    </source>
</evidence>
<evidence type="ECO:0000250" key="2">
    <source>
        <dbReference type="UniProtKB" id="Q9FLL1"/>
    </source>
</evidence>
<evidence type="ECO:0000250" key="3">
    <source>
        <dbReference type="UniProtKB" id="Q9ULX3"/>
    </source>
</evidence>
<evidence type="ECO:0000255" key="4"/>
<evidence type="ECO:0000256" key="5">
    <source>
        <dbReference type="SAM" id="MobiDB-lite"/>
    </source>
</evidence>
<evidence type="ECO:0000305" key="6"/>
<comment type="function">
    <text evidence="2 3">May play a role in mRNA degradation (By similarity). Endonuclease required for processing of 20S pre-rRNA precursor and biogenesis of 40S ribosomal subunits (By similarity).</text>
</comment>
<comment type="subunit">
    <text evidence="2 3">May interact with UPF2 (By similarity). Component of the small ribosomal subunit, ribosomal RNA processing complex (SSU RRP complex) (By similarity).</text>
</comment>
<comment type="subcellular location">
    <subcellularLocation>
        <location evidence="3">Nucleus</location>
    </subcellularLocation>
</comment>
<comment type="similarity">
    <text evidence="6">Belongs to the NOB1 family.</text>
</comment>
<protein>
    <recommendedName>
        <fullName>RNA-binding protein NOB1</fullName>
        <ecNumber evidence="2">3.1.-.-</ecNumber>
    </recommendedName>
</protein>
<organism>
    <name type="scientific">Macaca fascicularis</name>
    <name type="common">Crab-eating macaque</name>
    <name type="synonym">Cynomolgus monkey</name>
    <dbReference type="NCBI Taxonomy" id="9541"/>
    <lineage>
        <taxon>Eukaryota</taxon>
        <taxon>Metazoa</taxon>
        <taxon>Chordata</taxon>
        <taxon>Craniata</taxon>
        <taxon>Vertebrata</taxon>
        <taxon>Euteleostomi</taxon>
        <taxon>Mammalia</taxon>
        <taxon>Eutheria</taxon>
        <taxon>Euarchontoglires</taxon>
        <taxon>Primates</taxon>
        <taxon>Haplorrhini</taxon>
        <taxon>Catarrhini</taxon>
        <taxon>Cercopithecidae</taxon>
        <taxon>Cercopithecinae</taxon>
        <taxon>Macaca</taxon>
    </lineage>
</organism>
<name>NOB1_MACFA</name>
<reference key="1">
    <citation type="submission" date="2005-06" db="EMBL/GenBank/DDBJ databases">
        <title>DNA sequences of macaque genes expressed in brain or testis and its evolutionary implications.</title>
        <authorList>
            <consortium name="International consortium for macaque cDNA sequencing and analysis"/>
        </authorList>
    </citation>
    <scope>NUCLEOTIDE SEQUENCE [LARGE SCALE MRNA]</scope>
    <source>
        <tissue>Brain cortex</tissue>
    </source>
</reference>
<feature type="chain" id="PRO_0000233266" description="RNA-binding protein NOB1">
    <location>
        <begin position="1"/>
        <end position="412"/>
    </location>
</feature>
<feature type="domain" description="PINc" evidence="4">
    <location>
        <begin position="5"/>
        <end position="108"/>
    </location>
</feature>
<feature type="zinc finger region" description="NOB1" evidence="4">
    <location>
        <begin position="260"/>
        <end position="332"/>
    </location>
</feature>
<feature type="region of interest" description="Disordered" evidence="5">
    <location>
        <begin position="121"/>
        <end position="147"/>
    </location>
</feature>
<feature type="region of interest" description="Disordered" evidence="5">
    <location>
        <begin position="178"/>
        <end position="210"/>
    </location>
</feature>
<feature type="compositionally biased region" description="Basic and acidic residues" evidence="5">
    <location>
        <begin position="136"/>
        <end position="147"/>
    </location>
</feature>
<feature type="binding site" evidence="1">
    <location>
        <position position="270"/>
    </location>
    <ligand>
        <name>Zn(2+)</name>
        <dbReference type="ChEBI" id="CHEBI:29105"/>
    </ligand>
</feature>
<feature type="binding site" evidence="1">
    <location>
        <position position="273"/>
    </location>
    <ligand>
        <name>Zn(2+)</name>
        <dbReference type="ChEBI" id="CHEBI:29105"/>
    </ligand>
</feature>
<feature type="binding site" evidence="1">
    <location>
        <position position="285"/>
    </location>
    <ligand>
        <name>Zn(2+)</name>
        <dbReference type="ChEBI" id="CHEBI:29105"/>
    </ligand>
</feature>
<feature type="binding site" evidence="1">
    <location>
        <position position="288"/>
    </location>
    <ligand>
        <name>Zn(2+)</name>
        <dbReference type="ChEBI" id="CHEBI:29105"/>
    </ligand>
</feature>
<feature type="modified residue" description="Phosphoserine" evidence="3">
    <location>
        <position position="184"/>
    </location>
</feature>
<feature type="modified residue" description="Phosphoserine" evidence="3">
    <location>
        <position position="201"/>
    </location>
</feature>
<feature type="modified residue" description="Phosphoserine" evidence="3">
    <location>
        <position position="325"/>
    </location>
</feature>
<feature type="modified residue" description="Phosphoserine" evidence="3">
    <location>
        <position position="352"/>
    </location>
</feature>
<accession>Q4R537</accession>
<proteinExistence type="evidence at transcript level"/>